<organism>
    <name type="scientific">Neisseria gonorrhoeae (strain NCCP11945)</name>
    <dbReference type="NCBI Taxonomy" id="521006"/>
    <lineage>
        <taxon>Bacteria</taxon>
        <taxon>Pseudomonadati</taxon>
        <taxon>Pseudomonadota</taxon>
        <taxon>Betaproteobacteria</taxon>
        <taxon>Neisseriales</taxon>
        <taxon>Neisseriaceae</taxon>
        <taxon>Neisseria</taxon>
    </lineage>
</organism>
<feature type="chain" id="PRO_1000095462" description="ATP phosphoribosyltransferase regulatory subunit">
    <location>
        <begin position="1"/>
        <end position="383"/>
    </location>
</feature>
<sequence length="383" mass="41834">MQTWQLPEHIADVLPTNARQLESAREQLLALFRVHGYELVQPPLMEYAHSLLTHIDAGLSLKTILVTDRLSGRQLGIRADITPQVARIDAHLLSANQGINRLCYAGPVLHAQPDGLPNMREPLQAGAEMYGFADIRGDIELIDLMLKSMKIADMGKVLLSLGHIGIFRALSDAAHLDAGQSATLLALMQDKDTGSVEAQVKAWKLDGMWAKAFSLLPRLYGGREVLSDARGRLPDLSAVGGALDELQAVCDAFPDNEIHIDLSELRVDNYHTGLLYAAYAADFHDAVARGGRYDGLGGYFGRARPATGFSFDLRSFIGRLPAVERQPAVLVDAEDAEAAREAVEALREQGQCVVIDYGIGHNVSEELAGRLKKTDGVWQIVKR</sequence>
<comment type="function">
    <text evidence="1">Required for the first step of histidine biosynthesis. May allow the feedback regulation of ATP phosphoribosyltransferase activity by histidine.</text>
</comment>
<comment type="pathway">
    <text evidence="1">Amino-acid biosynthesis; L-histidine biosynthesis; L-histidine from 5-phospho-alpha-D-ribose 1-diphosphate: step 1/9.</text>
</comment>
<comment type="subunit">
    <text evidence="1">Heteromultimer composed of HisG and HisZ subunits.</text>
</comment>
<comment type="subcellular location">
    <subcellularLocation>
        <location evidence="1">Cytoplasm</location>
    </subcellularLocation>
</comment>
<comment type="miscellaneous">
    <text>This function is generally fulfilled by the C-terminal part of HisG, which is missing in some bacteria such as this one.</text>
</comment>
<comment type="similarity">
    <text evidence="1">Belongs to the class-II aminoacyl-tRNA synthetase family. HisZ subfamily.</text>
</comment>
<protein>
    <recommendedName>
        <fullName evidence="1">ATP phosphoribosyltransferase regulatory subunit</fullName>
    </recommendedName>
</protein>
<reference key="1">
    <citation type="journal article" date="2008" name="J. Bacteriol.">
        <title>Complete genome sequence of Neisseria gonorrhoeae NCCP11945.</title>
        <authorList>
            <person name="Chung G.T."/>
            <person name="Yoo J.S."/>
            <person name="Oh H.B."/>
            <person name="Lee Y.S."/>
            <person name="Cha S.H."/>
            <person name="Kim S.J."/>
            <person name="Yoo C.K."/>
        </authorList>
    </citation>
    <scope>NUCLEOTIDE SEQUENCE [LARGE SCALE GENOMIC DNA]</scope>
    <source>
        <strain>NCCP11945</strain>
    </source>
</reference>
<keyword id="KW-0028">Amino-acid biosynthesis</keyword>
<keyword id="KW-0963">Cytoplasm</keyword>
<keyword id="KW-0368">Histidine biosynthesis</keyword>
<evidence type="ECO:0000255" key="1">
    <source>
        <dbReference type="HAMAP-Rule" id="MF_00125"/>
    </source>
</evidence>
<accession>B4RK97</accession>
<dbReference type="EMBL" id="CP001050">
    <property type="protein sequence ID" value="ACF29248.1"/>
    <property type="molecule type" value="Genomic_DNA"/>
</dbReference>
<dbReference type="RefSeq" id="WP_003690853.1">
    <property type="nucleotide sequence ID" value="NC_011035.1"/>
</dbReference>
<dbReference type="SMR" id="B4RK97"/>
<dbReference type="KEGG" id="ngk:NGK_0557"/>
<dbReference type="HOGENOM" id="CLU_025113_0_1_4"/>
<dbReference type="UniPathway" id="UPA00031">
    <property type="reaction ID" value="UER00006"/>
</dbReference>
<dbReference type="Proteomes" id="UP000002564">
    <property type="component" value="Chromosome"/>
</dbReference>
<dbReference type="GO" id="GO:0005737">
    <property type="term" value="C:cytoplasm"/>
    <property type="evidence" value="ECO:0007669"/>
    <property type="project" value="UniProtKB-SubCell"/>
</dbReference>
<dbReference type="GO" id="GO:0004821">
    <property type="term" value="F:histidine-tRNA ligase activity"/>
    <property type="evidence" value="ECO:0007669"/>
    <property type="project" value="TreeGrafter"/>
</dbReference>
<dbReference type="GO" id="GO:0006427">
    <property type="term" value="P:histidyl-tRNA aminoacylation"/>
    <property type="evidence" value="ECO:0007669"/>
    <property type="project" value="TreeGrafter"/>
</dbReference>
<dbReference type="GO" id="GO:0000105">
    <property type="term" value="P:L-histidine biosynthetic process"/>
    <property type="evidence" value="ECO:0007669"/>
    <property type="project" value="UniProtKB-UniRule"/>
</dbReference>
<dbReference type="FunFam" id="3.30.930.10:FF:000096">
    <property type="entry name" value="ATP phosphoribosyltransferase regulatory subunit"/>
    <property type="match status" value="1"/>
</dbReference>
<dbReference type="Gene3D" id="3.30.930.10">
    <property type="entry name" value="Bira Bifunctional Protein, Domain 2"/>
    <property type="match status" value="1"/>
</dbReference>
<dbReference type="HAMAP" id="MF_00125">
    <property type="entry name" value="HisZ"/>
    <property type="match status" value="1"/>
</dbReference>
<dbReference type="InterPro" id="IPR045864">
    <property type="entry name" value="aa-tRNA-synth_II/BPL/LPL"/>
</dbReference>
<dbReference type="InterPro" id="IPR041715">
    <property type="entry name" value="HisRS-like_core"/>
</dbReference>
<dbReference type="InterPro" id="IPR004516">
    <property type="entry name" value="HisRS/HisZ"/>
</dbReference>
<dbReference type="InterPro" id="IPR004517">
    <property type="entry name" value="HisZ"/>
</dbReference>
<dbReference type="NCBIfam" id="NF008935">
    <property type="entry name" value="PRK12292.1-1"/>
    <property type="match status" value="1"/>
</dbReference>
<dbReference type="NCBIfam" id="NF009086">
    <property type="entry name" value="PRK12421.1"/>
    <property type="match status" value="1"/>
</dbReference>
<dbReference type="PANTHER" id="PTHR43707:SF1">
    <property type="entry name" value="HISTIDINE--TRNA LIGASE, MITOCHONDRIAL-RELATED"/>
    <property type="match status" value="1"/>
</dbReference>
<dbReference type="PANTHER" id="PTHR43707">
    <property type="entry name" value="HISTIDYL-TRNA SYNTHETASE"/>
    <property type="match status" value="1"/>
</dbReference>
<dbReference type="Pfam" id="PF13393">
    <property type="entry name" value="tRNA-synt_His"/>
    <property type="match status" value="1"/>
</dbReference>
<dbReference type="PIRSF" id="PIRSF001549">
    <property type="entry name" value="His-tRNA_synth"/>
    <property type="match status" value="1"/>
</dbReference>
<dbReference type="SUPFAM" id="SSF55681">
    <property type="entry name" value="Class II aaRS and biotin synthetases"/>
    <property type="match status" value="1"/>
</dbReference>
<name>HISZ_NEIG2</name>
<gene>
    <name evidence="1" type="primary">hisZ</name>
    <name type="ordered locus">NGK_0557</name>
</gene>
<proteinExistence type="inferred from homology"/>